<keyword id="KW-0963">Cytoplasm</keyword>
<keyword id="KW-0275">Fatty acid biosynthesis</keyword>
<keyword id="KW-0276">Fatty acid metabolism</keyword>
<keyword id="KW-0444">Lipid biosynthesis</keyword>
<keyword id="KW-0443">Lipid metabolism</keyword>
<keyword id="KW-0596">Phosphopantetheine</keyword>
<keyword id="KW-0597">Phosphoprotein</keyword>
<organism>
    <name type="scientific">Streptococcus thermophilus (strain CNRZ 1066)</name>
    <dbReference type="NCBI Taxonomy" id="299768"/>
    <lineage>
        <taxon>Bacteria</taxon>
        <taxon>Bacillati</taxon>
        <taxon>Bacillota</taxon>
        <taxon>Bacilli</taxon>
        <taxon>Lactobacillales</taxon>
        <taxon>Streptococcaceae</taxon>
        <taxon>Streptococcus</taxon>
    </lineage>
</organism>
<feature type="chain" id="PRO_1000066701" description="Acyl carrier protein">
    <location>
        <begin position="1"/>
        <end position="74"/>
    </location>
</feature>
<feature type="domain" description="Carrier" evidence="2">
    <location>
        <begin position="1"/>
        <end position="73"/>
    </location>
</feature>
<feature type="modified residue" description="O-(pantetheine 4'-phosphoryl)serine" evidence="2">
    <location>
        <position position="35"/>
    </location>
</feature>
<protein>
    <recommendedName>
        <fullName evidence="1">Acyl carrier protein</fullName>
        <shortName evidence="1">ACP</shortName>
    </recommendedName>
</protein>
<reference key="1">
    <citation type="journal article" date="2004" name="Nat. Biotechnol.">
        <title>Complete sequence and comparative genome analysis of the dairy bacterium Streptococcus thermophilus.</title>
        <authorList>
            <person name="Bolotin A."/>
            <person name="Quinquis B."/>
            <person name="Renault P."/>
            <person name="Sorokin A."/>
            <person name="Ehrlich S.D."/>
            <person name="Kulakauskas S."/>
            <person name="Lapidus A."/>
            <person name="Goltsman E."/>
            <person name="Mazur M."/>
            <person name="Pusch G.D."/>
            <person name="Fonstein M."/>
            <person name="Overbeek R."/>
            <person name="Kyprides N."/>
            <person name="Purnelle B."/>
            <person name="Prozzi D."/>
            <person name="Ngui K."/>
            <person name="Masuy D."/>
            <person name="Hancy F."/>
            <person name="Burteau S."/>
            <person name="Boutry M."/>
            <person name="Delcour J."/>
            <person name="Goffeau A."/>
            <person name="Hols P."/>
        </authorList>
    </citation>
    <scope>NUCLEOTIDE SEQUENCE [LARGE SCALE GENOMIC DNA]</scope>
    <source>
        <strain>CNRZ 1066</strain>
    </source>
</reference>
<gene>
    <name evidence="1" type="primary">acpP</name>
    <name type="ordered locus">str0384</name>
</gene>
<proteinExistence type="inferred from homology"/>
<dbReference type="EMBL" id="CP000024">
    <property type="protein sequence ID" value="AAV61986.1"/>
    <property type="molecule type" value="Genomic_DNA"/>
</dbReference>
<dbReference type="RefSeq" id="WP_002885495.1">
    <property type="nucleotide sequence ID" value="NC_006449.1"/>
</dbReference>
<dbReference type="SMR" id="Q5M183"/>
<dbReference type="KEGG" id="stc:str0384"/>
<dbReference type="HOGENOM" id="CLU_108696_5_0_9"/>
<dbReference type="UniPathway" id="UPA00094"/>
<dbReference type="GO" id="GO:0005829">
    <property type="term" value="C:cytosol"/>
    <property type="evidence" value="ECO:0007669"/>
    <property type="project" value="TreeGrafter"/>
</dbReference>
<dbReference type="GO" id="GO:0016020">
    <property type="term" value="C:membrane"/>
    <property type="evidence" value="ECO:0007669"/>
    <property type="project" value="GOC"/>
</dbReference>
<dbReference type="GO" id="GO:0000035">
    <property type="term" value="F:acyl binding"/>
    <property type="evidence" value="ECO:0007669"/>
    <property type="project" value="TreeGrafter"/>
</dbReference>
<dbReference type="GO" id="GO:0000036">
    <property type="term" value="F:acyl carrier activity"/>
    <property type="evidence" value="ECO:0007669"/>
    <property type="project" value="UniProtKB-UniRule"/>
</dbReference>
<dbReference type="GO" id="GO:0009245">
    <property type="term" value="P:lipid A biosynthetic process"/>
    <property type="evidence" value="ECO:0007669"/>
    <property type="project" value="TreeGrafter"/>
</dbReference>
<dbReference type="Gene3D" id="1.10.1200.10">
    <property type="entry name" value="ACP-like"/>
    <property type="match status" value="1"/>
</dbReference>
<dbReference type="HAMAP" id="MF_01217">
    <property type="entry name" value="Acyl_carrier"/>
    <property type="match status" value="1"/>
</dbReference>
<dbReference type="InterPro" id="IPR003231">
    <property type="entry name" value="ACP"/>
</dbReference>
<dbReference type="InterPro" id="IPR036736">
    <property type="entry name" value="ACP-like_sf"/>
</dbReference>
<dbReference type="InterPro" id="IPR009081">
    <property type="entry name" value="PP-bd_ACP"/>
</dbReference>
<dbReference type="NCBIfam" id="NF002150">
    <property type="entry name" value="PRK00982.1-4"/>
    <property type="match status" value="1"/>
</dbReference>
<dbReference type="PANTHER" id="PTHR20863">
    <property type="entry name" value="ACYL CARRIER PROTEIN"/>
    <property type="match status" value="1"/>
</dbReference>
<dbReference type="PANTHER" id="PTHR20863:SF62">
    <property type="entry name" value="ACYL CARRIER PROTEIN"/>
    <property type="match status" value="1"/>
</dbReference>
<dbReference type="Pfam" id="PF00550">
    <property type="entry name" value="PP-binding"/>
    <property type="match status" value="1"/>
</dbReference>
<dbReference type="SUPFAM" id="SSF47336">
    <property type="entry name" value="ACP-like"/>
    <property type="match status" value="1"/>
</dbReference>
<dbReference type="PROSITE" id="PS50075">
    <property type="entry name" value="CARRIER"/>
    <property type="match status" value="1"/>
</dbReference>
<accession>Q5M183</accession>
<evidence type="ECO:0000255" key="1">
    <source>
        <dbReference type="HAMAP-Rule" id="MF_01217"/>
    </source>
</evidence>
<evidence type="ECO:0000255" key="2">
    <source>
        <dbReference type="PROSITE-ProRule" id="PRU00258"/>
    </source>
</evidence>
<sequence>MAVFEKVQEIIVEELGKDAEEVKVETTFDELDADSLDVFQVISEIEDEFDIQIETEEGLNTVGDLVAYVEEKTK</sequence>
<comment type="function">
    <text evidence="1">Carrier of the growing fatty acid chain in fatty acid biosynthesis.</text>
</comment>
<comment type="pathway">
    <text evidence="1">Lipid metabolism; fatty acid biosynthesis.</text>
</comment>
<comment type="subcellular location">
    <subcellularLocation>
        <location evidence="1">Cytoplasm</location>
    </subcellularLocation>
</comment>
<comment type="PTM">
    <text evidence="1">4'-phosphopantetheine is transferred from CoA to a specific serine of apo-ACP by AcpS. This modification is essential for activity because fatty acids are bound in thioester linkage to the sulfhydryl of the prosthetic group.</text>
</comment>
<comment type="similarity">
    <text evidence="1">Belongs to the acyl carrier protein (ACP) family.</text>
</comment>
<name>ACP_STRT1</name>